<dbReference type="EMBL" id="CP000830">
    <property type="protein sequence ID" value="ABV92038.1"/>
    <property type="molecule type" value="Genomic_DNA"/>
</dbReference>
<dbReference type="RefSeq" id="WP_012176969.1">
    <property type="nucleotide sequence ID" value="NC_009952.1"/>
</dbReference>
<dbReference type="SMR" id="A8LM61"/>
<dbReference type="STRING" id="398580.Dshi_0289"/>
<dbReference type="KEGG" id="dsh:Dshi_0289"/>
<dbReference type="eggNOG" id="COG0197">
    <property type="taxonomic scope" value="Bacteria"/>
</dbReference>
<dbReference type="HOGENOM" id="CLU_078858_2_1_5"/>
<dbReference type="OrthoDB" id="9802589at2"/>
<dbReference type="Proteomes" id="UP000006833">
    <property type="component" value="Chromosome"/>
</dbReference>
<dbReference type="GO" id="GO:0022625">
    <property type="term" value="C:cytosolic large ribosomal subunit"/>
    <property type="evidence" value="ECO:0007669"/>
    <property type="project" value="TreeGrafter"/>
</dbReference>
<dbReference type="GO" id="GO:0019843">
    <property type="term" value="F:rRNA binding"/>
    <property type="evidence" value="ECO:0007669"/>
    <property type="project" value="UniProtKB-UniRule"/>
</dbReference>
<dbReference type="GO" id="GO:0003735">
    <property type="term" value="F:structural constituent of ribosome"/>
    <property type="evidence" value="ECO:0007669"/>
    <property type="project" value="InterPro"/>
</dbReference>
<dbReference type="GO" id="GO:0000049">
    <property type="term" value="F:tRNA binding"/>
    <property type="evidence" value="ECO:0007669"/>
    <property type="project" value="UniProtKB-KW"/>
</dbReference>
<dbReference type="GO" id="GO:0006412">
    <property type="term" value="P:translation"/>
    <property type="evidence" value="ECO:0007669"/>
    <property type="project" value="UniProtKB-UniRule"/>
</dbReference>
<dbReference type="CDD" id="cd01433">
    <property type="entry name" value="Ribosomal_L16_L10e"/>
    <property type="match status" value="1"/>
</dbReference>
<dbReference type="FunFam" id="3.90.1170.10:FF:000001">
    <property type="entry name" value="50S ribosomal protein L16"/>
    <property type="match status" value="1"/>
</dbReference>
<dbReference type="Gene3D" id="3.90.1170.10">
    <property type="entry name" value="Ribosomal protein L10e/L16"/>
    <property type="match status" value="1"/>
</dbReference>
<dbReference type="HAMAP" id="MF_01342">
    <property type="entry name" value="Ribosomal_uL16"/>
    <property type="match status" value="1"/>
</dbReference>
<dbReference type="InterPro" id="IPR047873">
    <property type="entry name" value="Ribosomal_uL16"/>
</dbReference>
<dbReference type="InterPro" id="IPR000114">
    <property type="entry name" value="Ribosomal_uL16_bact-type"/>
</dbReference>
<dbReference type="InterPro" id="IPR020798">
    <property type="entry name" value="Ribosomal_uL16_CS"/>
</dbReference>
<dbReference type="InterPro" id="IPR016180">
    <property type="entry name" value="Ribosomal_uL16_dom"/>
</dbReference>
<dbReference type="InterPro" id="IPR036920">
    <property type="entry name" value="Ribosomal_uL16_sf"/>
</dbReference>
<dbReference type="NCBIfam" id="TIGR01164">
    <property type="entry name" value="rplP_bact"/>
    <property type="match status" value="1"/>
</dbReference>
<dbReference type="PANTHER" id="PTHR12220">
    <property type="entry name" value="50S/60S RIBOSOMAL PROTEIN L16"/>
    <property type="match status" value="1"/>
</dbReference>
<dbReference type="PANTHER" id="PTHR12220:SF13">
    <property type="entry name" value="LARGE RIBOSOMAL SUBUNIT PROTEIN UL16M"/>
    <property type="match status" value="1"/>
</dbReference>
<dbReference type="Pfam" id="PF00252">
    <property type="entry name" value="Ribosomal_L16"/>
    <property type="match status" value="1"/>
</dbReference>
<dbReference type="PRINTS" id="PR00060">
    <property type="entry name" value="RIBOSOMALL16"/>
</dbReference>
<dbReference type="SUPFAM" id="SSF54686">
    <property type="entry name" value="Ribosomal protein L16p/L10e"/>
    <property type="match status" value="1"/>
</dbReference>
<dbReference type="PROSITE" id="PS00586">
    <property type="entry name" value="RIBOSOMAL_L16_1"/>
    <property type="match status" value="1"/>
</dbReference>
<dbReference type="PROSITE" id="PS00701">
    <property type="entry name" value="RIBOSOMAL_L16_2"/>
    <property type="match status" value="1"/>
</dbReference>
<name>RL16_DINSH</name>
<organism>
    <name type="scientific">Dinoroseobacter shibae (strain DSM 16493 / NCIMB 14021 / DFL 12)</name>
    <dbReference type="NCBI Taxonomy" id="398580"/>
    <lineage>
        <taxon>Bacteria</taxon>
        <taxon>Pseudomonadati</taxon>
        <taxon>Pseudomonadota</taxon>
        <taxon>Alphaproteobacteria</taxon>
        <taxon>Rhodobacterales</taxon>
        <taxon>Roseobacteraceae</taxon>
        <taxon>Dinoroseobacter</taxon>
    </lineage>
</organism>
<keyword id="KW-1185">Reference proteome</keyword>
<keyword id="KW-0687">Ribonucleoprotein</keyword>
<keyword id="KW-0689">Ribosomal protein</keyword>
<keyword id="KW-0694">RNA-binding</keyword>
<keyword id="KW-0699">rRNA-binding</keyword>
<keyword id="KW-0820">tRNA-binding</keyword>
<protein>
    <recommendedName>
        <fullName evidence="1">Large ribosomal subunit protein uL16</fullName>
    </recommendedName>
    <alternativeName>
        <fullName evidence="2">50S ribosomal protein L16</fullName>
    </alternativeName>
</protein>
<gene>
    <name evidence="1" type="primary">rplP</name>
    <name type="ordered locus">Dshi_0289</name>
</gene>
<accession>A8LM61</accession>
<feature type="chain" id="PRO_1000086754" description="Large ribosomal subunit protein uL16">
    <location>
        <begin position="1"/>
        <end position="137"/>
    </location>
</feature>
<proteinExistence type="inferred from homology"/>
<comment type="function">
    <text evidence="1">Binds 23S rRNA and is also seen to make contacts with the A and possibly P site tRNAs.</text>
</comment>
<comment type="subunit">
    <text evidence="1">Part of the 50S ribosomal subunit.</text>
</comment>
<comment type="similarity">
    <text evidence="1">Belongs to the universal ribosomal protein uL16 family.</text>
</comment>
<sequence>MLQPKRTKFRKQFKGRIRGEAKGGSDLNFGTYGLKALQPERITARQIEAARRAMTRHMKRQGRVWIRIFPDLPVTSKPVEVRMGKGKGSVDFWACKVKPGRIMFEIDGVSEPVAREALRLAAMKLPIKTRTVVREDW</sequence>
<reference key="1">
    <citation type="journal article" date="2010" name="ISME J.">
        <title>The complete genome sequence of the algal symbiont Dinoroseobacter shibae: a hitchhiker's guide to life in the sea.</title>
        <authorList>
            <person name="Wagner-Dobler I."/>
            <person name="Ballhausen B."/>
            <person name="Berger M."/>
            <person name="Brinkhoff T."/>
            <person name="Buchholz I."/>
            <person name="Bunk B."/>
            <person name="Cypionka H."/>
            <person name="Daniel R."/>
            <person name="Drepper T."/>
            <person name="Gerdts G."/>
            <person name="Hahnke S."/>
            <person name="Han C."/>
            <person name="Jahn D."/>
            <person name="Kalhoefer D."/>
            <person name="Kiss H."/>
            <person name="Klenk H.P."/>
            <person name="Kyrpides N."/>
            <person name="Liebl W."/>
            <person name="Liesegang H."/>
            <person name="Meincke L."/>
            <person name="Pati A."/>
            <person name="Petersen J."/>
            <person name="Piekarski T."/>
            <person name="Pommerenke C."/>
            <person name="Pradella S."/>
            <person name="Pukall R."/>
            <person name="Rabus R."/>
            <person name="Stackebrandt E."/>
            <person name="Thole S."/>
            <person name="Thompson L."/>
            <person name="Tielen P."/>
            <person name="Tomasch J."/>
            <person name="von Jan M."/>
            <person name="Wanphrut N."/>
            <person name="Wichels A."/>
            <person name="Zech H."/>
            <person name="Simon M."/>
        </authorList>
    </citation>
    <scope>NUCLEOTIDE SEQUENCE [LARGE SCALE GENOMIC DNA]</scope>
    <source>
        <strain>DSM 16493 / NCIMB 14021 / DFL 12</strain>
    </source>
</reference>
<evidence type="ECO:0000255" key="1">
    <source>
        <dbReference type="HAMAP-Rule" id="MF_01342"/>
    </source>
</evidence>
<evidence type="ECO:0000305" key="2"/>